<gene>
    <name evidence="1" type="primary">purA</name>
    <name type="ordered locus">FN1605</name>
</gene>
<sequence length="425" mass="47255">MAGYVVVGTQWGDEGKGKIIDVLSEKADYVVRFQGGNNAGHTVVVDGEKFILQLLPSGVLQAGTCVIGPGVVIDPKVFLDEIDRIEKRGAKTDHVIISDRAHVIMPYHIEMDKIRESVEDRIKIGTTKKGIGPCYADKISRDGIRMSDLLDLKQFEEKLRYNLKEKNEIFTKIYGLEPLDFDTIFEEYKGYAEKIKHRIVDTIPMVNKALDENKLVLFEGAQAMMLDINYGTYPYVTSSSPTLGGVTTGAGISPRKIDKGIGVMKAYTTRVGEGPFVTEIKGEFGDKIRGIGGEYGAVTGRPRRCGWLDLVVGRYATEINGLTDIVMTKIDVLSGLGKLKICTAYEIDGVIHEYVPADTKSLDRAIPIYEELDGWDEDITQIKKYEDLPVNCRKYLERVQEILGCPISVVSVGPDRSQNIHIREI</sequence>
<dbReference type="EC" id="6.3.4.4" evidence="1"/>
<dbReference type="EMBL" id="AE009951">
    <property type="protein sequence ID" value="AAL93720.1"/>
    <property type="molecule type" value="Genomic_DNA"/>
</dbReference>
<dbReference type="RefSeq" id="NP_602421.1">
    <property type="nucleotide sequence ID" value="NC_003454.1"/>
</dbReference>
<dbReference type="RefSeq" id="WP_011015701.1">
    <property type="nucleotide sequence ID" value="NZ_OZ209243.1"/>
</dbReference>
<dbReference type="SMR" id="P58793"/>
<dbReference type="FunCoup" id="P58793">
    <property type="interactions" value="374"/>
</dbReference>
<dbReference type="STRING" id="190304.FN1605"/>
<dbReference type="PaxDb" id="190304-FN1605"/>
<dbReference type="EnsemblBacteria" id="AAL93720">
    <property type="protein sequence ID" value="AAL93720"/>
    <property type="gene ID" value="FN1605"/>
</dbReference>
<dbReference type="KEGG" id="fnu:FN1605"/>
<dbReference type="PATRIC" id="fig|190304.8.peg.97"/>
<dbReference type="eggNOG" id="COG0104">
    <property type="taxonomic scope" value="Bacteria"/>
</dbReference>
<dbReference type="HOGENOM" id="CLU_029848_0_0_0"/>
<dbReference type="InParanoid" id="P58793"/>
<dbReference type="BioCyc" id="FNUC190304:G1FZS-108-MONOMER"/>
<dbReference type="UniPathway" id="UPA00075">
    <property type="reaction ID" value="UER00335"/>
</dbReference>
<dbReference type="Proteomes" id="UP000002521">
    <property type="component" value="Chromosome"/>
</dbReference>
<dbReference type="GO" id="GO:0005737">
    <property type="term" value="C:cytoplasm"/>
    <property type="evidence" value="ECO:0000318"/>
    <property type="project" value="GO_Central"/>
</dbReference>
<dbReference type="GO" id="GO:0004019">
    <property type="term" value="F:adenylosuccinate synthase activity"/>
    <property type="evidence" value="ECO:0000318"/>
    <property type="project" value="GO_Central"/>
</dbReference>
<dbReference type="GO" id="GO:0005525">
    <property type="term" value="F:GTP binding"/>
    <property type="evidence" value="ECO:0007669"/>
    <property type="project" value="UniProtKB-UniRule"/>
</dbReference>
<dbReference type="GO" id="GO:0000287">
    <property type="term" value="F:magnesium ion binding"/>
    <property type="evidence" value="ECO:0007669"/>
    <property type="project" value="UniProtKB-UniRule"/>
</dbReference>
<dbReference type="GO" id="GO:0044208">
    <property type="term" value="P:'de novo' AMP biosynthetic process"/>
    <property type="evidence" value="ECO:0000318"/>
    <property type="project" value="GO_Central"/>
</dbReference>
<dbReference type="GO" id="GO:0046040">
    <property type="term" value="P:IMP metabolic process"/>
    <property type="evidence" value="ECO:0000318"/>
    <property type="project" value="GO_Central"/>
</dbReference>
<dbReference type="CDD" id="cd03108">
    <property type="entry name" value="AdSS"/>
    <property type="match status" value="1"/>
</dbReference>
<dbReference type="FunFam" id="1.10.300.10:FF:000001">
    <property type="entry name" value="Adenylosuccinate synthetase"/>
    <property type="match status" value="1"/>
</dbReference>
<dbReference type="FunFam" id="3.90.170.10:FF:000001">
    <property type="entry name" value="Adenylosuccinate synthetase"/>
    <property type="match status" value="1"/>
</dbReference>
<dbReference type="Gene3D" id="3.40.440.10">
    <property type="entry name" value="Adenylosuccinate Synthetase, subunit A, domain 1"/>
    <property type="match status" value="1"/>
</dbReference>
<dbReference type="Gene3D" id="1.10.300.10">
    <property type="entry name" value="Adenylosuccinate Synthetase, subunit A, domain 2"/>
    <property type="match status" value="1"/>
</dbReference>
<dbReference type="Gene3D" id="3.90.170.10">
    <property type="entry name" value="Adenylosuccinate Synthetase, subunit A, domain 3"/>
    <property type="match status" value="1"/>
</dbReference>
<dbReference type="HAMAP" id="MF_00011">
    <property type="entry name" value="Adenylosucc_synth"/>
    <property type="match status" value="1"/>
</dbReference>
<dbReference type="InterPro" id="IPR018220">
    <property type="entry name" value="Adenylosuccin_syn_GTP-bd"/>
</dbReference>
<dbReference type="InterPro" id="IPR033128">
    <property type="entry name" value="Adenylosuccin_syn_Lys_AS"/>
</dbReference>
<dbReference type="InterPro" id="IPR042109">
    <property type="entry name" value="Adenylosuccinate_synth_dom1"/>
</dbReference>
<dbReference type="InterPro" id="IPR042110">
    <property type="entry name" value="Adenylosuccinate_synth_dom2"/>
</dbReference>
<dbReference type="InterPro" id="IPR042111">
    <property type="entry name" value="Adenylosuccinate_synth_dom3"/>
</dbReference>
<dbReference type="InterPro" id="IPR001114">
    <property type="entry name" value="Adenylosuccinate_synthetase"/>
</dbReference>
<dbReference type="InterPro" id="IPR027417">
    <property type="entry name" value="P-loop_NTPase"/>
</dbReference>
<dbReference type="NCBIfam" id="NF002223">
    <property type="entry name" value="PRK01117.1"/>
    <property type="match status" value="1"/>
</dbReference>
<dbReference type="NCBIfam" id="TIGR00184">
    <property type="entry name" value="purA"/>
    <property type="match status" value="1"/>
</dbReference>
<dbReference type="PANTHER" id="PTHR11846">
    <property type="entry name" value="ADENYLOSUCCINATE SYNTHETASE"/>
    <property type="match status" value="1"/>
</dbReference>
<dbReference type="PANTHER" id="PTHR11846:SF0">
    <property type="entry name" value="ADENYLOSUCCINATE SYNTHETASE"/>
    <property type="match status" value="1"/>
</dbReference>
<dbReference type="Pfam" id="PF00709">
    <property type="entry name" value="Adenylsucc_synt"/>
    <property type="match status" value="1"/>
</dbReference>
<dbReference type="SMART" id="SM00788">
    <property type="entry name" value="Adenylsucc_synt"/>
    <property type="match status" value="1"/>
</dbReference>
<dbReference type="SUPFAM" id="SSF52540">
    <property type="entry name" value="P-loop containing nucleoside triphosphate hydrolases"/>
    <property type="match status" value="1"/>
</dbReference>
<dbReference type="PROSITE" id="PS01266">
    <property type="entry name" value="ADENYLOSUCCIN_SYN_1"/>
    <property type="match status" value="1"/>
</dbReference>
<dbReference type="PROSITE" id="PS00513">
    <property type="entry name" value="ADENYLOSUCCIN_SYN_2"/>
    <property type="match status" value="1"/>
</dbReference>
<evidence type="ECO:0000255" key="1">
    <source>
        <dbReference type="HAMAP-Rule" id="MF_00011"/>
    </source>
</evidence>
<reference key="1">
    <citation type="journal article" date="2002" name="J. Bacteriol.">
        <title>Genome sequence and analysis of the oral bacterium Fusobacterium nucleatum strain ATCC 25586.</title>
        <authorList>
            <person name="Kapatral V."/>
            <person name="Anderson I."/>
            <person name="Ivanova N."/>
            <person name="Reznik G."/>
            <person name="Los T."/>
            <person name="Lykidis A."/>
            <person name="Bhattacharyya A."/>
            <person name="Bartman A."/>
            <person name="Gardner W."/>
            <person name="Grechkin G."/>
            <person name="Zhu L."/>
            <person name="Vasieva O."/>
            <person name="Chu L."/>
            <person name="Kogan Y."/>
            <person name="Chaga O."/>
            <person name="Goltsman E."/>
            <person name="Bernal A."/>
            <person name="Larsen N."/>
            <person name="D'Souza M."/>
            <person name="Walunas T."/>
            <person name="Pusch G."/>
            <person name="Haselkorn R."/>
            <person name="Fonstein M."/>
            <person name="Kyrpides N.C."/>
            <person name="Overbeek R."/>
        </authorList>
    </citation>
    <scope>NUCLEOTIDE SEQUENCE [LARGE SCALE GENOMIC DNA]</scope>
    <source>
        <strain>ATCC 25586 / DSM 15643 / BCRC 10681 / CIP 101130 / JCM 8532 / KCTC 2640 / LMG 13131 / VPI 4355</strain>
    </source>
</reference>
<accession>P58793</accession>
<organism>
    <name type="scientific">Fusobacterium nucleatum subsp. nucleatum (strain ATCC 25586 / DSM 15643 / BCRC 10681 / CIP 101130 / JCM 8532 / KCTC 2640 / LMG 13131 / VPI 4355)</name>
    <dbReference type="NCBI Taxonomy" id="190304"/>
    <lineage>
        <taxon>Bacteria</taxon>
        <taxon>Fusobacteriati</taxon>
        <taxon>Fusobacteriota</taxon>
        <taxon>Fusobacteriia</taxon>
        <taxon>Fusobacteriales</taxon>
        <taxon>Fusobacteriaceae</taxon>
        <taxon>Fusobacterium</taxon>
    </lineage>
</organism>
<feature type="chain" id="PRO_0000095180" description="Adenylosuccinate synthetase">
    <location>
        <begin position="1"/>
        <end position="425"/>
    </location>
</feature>
<feature type="active site" description="Proton acceptor" evidence="1">
    <location>
        <position position="13"/>
    </location>
</feature>
<feature type="active site" description="Proton donor" evidence="1">
    <location>
        <position position="41"/>
    </location>
</feature>
<feature type="binding site" evidence="1">
    <location>
        <begin position="12"/>
        <end position="18"/>
    </location>
    <ligand>
        <name>GTP</name>
        <dbReference type="ChEBI" id="CHEBI:37565"/>
    </ligand>
</feature>
<feature type="binding site" description="in other chain" evidence="1">
    <location>
        <begin position="13"/>
        <end position="16"/>
    </location>
    <ligand>
        <name>IMP</name>
        <dbReference type="ChEBI" id="CHEBI:58053"/>
        <note>ligand shared between dimeric partners</note>
    </ligand>
</feature>
<feature type="binding site" evidence="1">
    <location>
        <position position="13"/>
    </location>
    <ligand>
        <name>Mg(2+)</name>
        <dbReference type="ChEBI" id="CHEBI:18420"/>
    </ligand>
</feature>
<feature type="binding site" description="in other chain" evidence="1">
    <location>
        <begin position="38"/>
        <end position="41"/>
    </location>
    <ligand>
        <name>IMP</name>
        <dbReference type="ChEBI" id="CHEBI:58053"/>
        <note>ligand shared between dimeric partners</note>
    </ligand>
</feature>
<feature type="binding site" evidence="1">
    <location>
        <begin position="40"/>
        <end position="42"/>
    </location>
    <ligand>
        <name>GTP</name>
        <dbReference type="ChEBI" id="CHEBI:37565"/>
    </ligand>
</feature>
<feature type="binding site" evidence="1">
    <location>
        <position position="40"/>
    </location>
    <ligand>
        <name>Mg(2+)</name>
        <dbReference type="ChEBI" id="CHEBI:18420"/>
    </ligand>
</feature>
<feature type="binding site" description="in other chain" evidence="1">
    <location>
        <position position="127"/>
    </location>
    <ligand>
        <name>IMP</name>
        <dbReference type="ChEBI" id="CHEBI:58053"/>
        <note>ligand shared between dimeric partners</note>
    </ligand>
</feature>
<feature type="binding site" evidence="1">
    <location>
        <position position="141"/>
    </location>
    <ligand>
        <name>IMP</name>
        <dbReference type="ChEBI" id="CHEBI:58053"/>
        <note>ligand shared between dimeric partners</note>
    </ligand>
</feature>
<feature type="binding site" description="in other chain" evidence="1">
    <location>
        <position position="222"/>
    </location>
    <ligand>
        <name>IMP</name>
        <dbReference type="ChEBI" id="CHEBI:58053"/>
        <note>ligand shared between dimeric partners</note>
    </ligand>
</feature>
<feature type="binding site" description="in other chain" evidence="1">
    <location>
        <position position="237"/>
    </location>
    <ligand>
        <name>IMP</name>
        <dbReference type="ChEBI" id="CHEBI:58053"/>
        <note>ligand shared between dimeric partners</note>
    </ligand>
</feature>
<feature type="binding site" evidence="1">
    <location>
        <begin position="297"/>
        <end position="303"/>
    </location>
    <ligand>
        <name>substrate</name>
    </ligand>
</feature>
<feature type="binding site" description="in other chain" evidence="1">
    <location>
        <position position="301"/>
    </location>
    <ligand>
        <name>IMP</name>
        <dbReference type="ChEBI" id="CHEBI:58053"/>
        <note>ligand shared between dimeric partners</note>
    </ligand>
</feature>
<feature type="binding site" evidence="1">
    <location>
        <position position="303"/>
    </location>
    <ligand>
        <name>GTP</name>
        <dbReference type="ChEBI" id="CHEBI:37565"/>
    </ligand>
</feature>
<feature type="binding site" evidence="1">
    <location>
        <begin position="329"/>
        <end position="331"/>
    </location>
    <ligand>
        <name>GTP</name>
        <dbReference type="ChEBI" id="CHEBI:37565"/>
    </ligand>
</feature>
<feature type="binding site" evidence="1">
    <location>
        <begin position="411"/>
        <end position="413"/>
    </location>
    <ligand>
        <name>GTP</name>
        <dbReference type="ChEBI" id="CHEBI:37565"/>
    </ligand>
</feature>
<comment type="function">
    <text evidence="1">Plays an important role in the de novo pathway of purine nucleotide biosynthesis. Catalyzes the first committed step in the biosynthesis of AMP from IMP.</text>
</comment>
<comment type="catalytic activity">
    <reaction evidence="1">
        <text>IMP + L-aspartate + GTP = N(6)-(1,2-dicarboxyethyl)-AMP + GDP + phosphate + 2 H(+)</text>
        <dbReference type="Rhea" id="RHEA:15753"/>
        <dbReference type="ChEBI" id="CHEBI:15378"/>
        <dbReference type="ChEBI" id="CHEBI:29991"/>
        <dbReference type="ChEBI" id="CHEBI:37565"/>
        <dbReference type="ChEBI" id="CHEBI:43474"/>
        <dbReference type="ChEBI" id="CHEBI:57567"/>
        <dbReference type="ChEBI" id="CHEBI:58053"/>
        <dbReference type="ChEBI" id="CHEBI:58189"/>
        <dbReference type="EC" id="6.3.4.4"/>
    </reaction>
</comment>
<comment type="cofactor">
    <cofactor evidence="1">
        <name>Mg(2+)</name>
        <dbReference type="ChEBI" id="CHEBI:18420"/>
    </cofactor>
    <text evidence="1">Binds 1 Mg(2+) ion per subunit.</text>
</comment>
<comment type="pathway">
    <text evidence="1">Purine metabolism; AMP biosynthesis via de novo pathway; AMP from IMP: step 1/2.</text>
</comment>
<comment type="subunit">
    <text evidence="1">Homodimer.</text>
</comment>
<comment type="subcellular location">
    <subcellularLocation>
        <location evidence="1">Cytoplasm</location>
    </subcellularLocation>
</comment>
<comment type="similarity">
    <text evidence="1">Belongs to the adenylosuccinate synthetase family.</text>
</comment>
<name>PURA_FUSNN</name>
<protein>
    <recommendedName>
        <fullName evidence="1">Adenylosuccinate synthetase</fullName>
        <shortName evidence="1">AMPSase</shortName>
        <shortName evidence="1">AdSS</shortName>
        <ecNumber evidence="1">6.3.4.4</ecNumber>
    </recommendedName>
    <alternativeName>
        <fullName evidence="1">IMP--aspartate ligase</fullName>
    </alternativeName>
</protein>
<keyword id="KW-0963">Cytoplasm</keyword>
<keyword id="KW-0342">GTP-binding</keyword>
<keyword id="KW-0436">Ligase</keyword>
<keyword id="KW-0460">Magnesium</keyword>
<keyword id="KW-0479">Metal-binding</keyword>
<keyword id="KW-0547">Nucleotide-binding</keyword>
<keyword id="KW-0658">Purine biosynthesis</keyword>
<keyword id="KW-1185">Reference proteome</keyword>
<proteinExistence type="inferred from homology"/>